<keyword id="KW-0004">4Fe-4S</keyword>
<keyword id="KW-0408">Iron</keyword>
<keyword id="KW-0411">Iron-sulfur</keyword>
<keyword id="KW-0456">Lyase</keyword>
<keyword id="KW-0479">Metal-binding</keyword>
<keyword id="KW-0949">S-adenosyl-L-methionine</keyword>
<keyword id="KW-0784">Thiamine biosynthesis</keyword>
<keyword id="KW-0862">Zinc</keyword>
<organism>
    <name type="scientific">Campylobacter jejuni subsp. doylei (strain ATCC BAA-1458 / RM4099 / 269.97)</name>
    <dbReference type="NCBI Taxonomy" id="360109"/>
    <lineage>
        <taxon>Bacteria</taxon>
        <taxon>Pseudomonadati</taxon>
        <taxon>Campylobacterota</taxon>
        <taxon>Epsilonproteobacteria</taxon>
        <taxon>Campylobacterales</taxon>
        <taxon>Campylobacteraceae</taxon>
        <taxon>Campylobacter</taxon>
    </lineage>
</organism>
<comment type="function">
    <text evidence="1">Catalyzes the synthesis of the hydroxymethylpyrimidine phosphate (HMP-P) moiety of thiamine from aminoimidazole ribotide (AIR) in a radical S-adenosyl-L-methionine (SAM)-dependent reaction.</text>
</comment>
<comment type="catalytic activity">
    <reaction evidence="1">
        <text>5-amino-1-(5-phospho-beta-D-ribosyl)imidazole + S-adenosyl-L-methionine = 4-amino-2-methyl-5-(phosphooxymethyl)pyrimidine + CO + 5'-deoxyadenosine + formate + L-methionine + 3 H(+)</text>
        <dbReference type="Rhea" id="RHEA:24840"/>
        <dbReference type="ChEBI" id="CHEBI:15378"/>
        <dbReference type="ChEBI" id="CHEBI:15740"/>
        <dbReference type="ChEBI" id="CHEBI:17245"/>
        <dbReference type="ChEBI" id="CHEBI:17319"/>
        <dbReference type="ChEBI" id="CHEBI:57844"/>
        <dbReference type="ChEBI" id="CHEBI:58354"/>
        <dbReference type="ChEBI" id="CHEBI:59789"/>
        <dbReference type="ChEBI" id="CHEBI:137981"/>
        <dbReference type="EC" id="4.1.99.17"/>
    </reaction>
</comment>
<comment type="cofactor">
    <cofactor evidence="1">
        <name>[4Fe-4S] cluster</name>
        <dbReference type="ChEBI" id="CHEBI:49883"/>
    </cofactor>
    <text evidence="1">Binds 1 [4Fe-4S] cluster per subunit. The cluster is coordinated with 3 cysteines and an exchangeable S-adenosyl-L-methionine.</text>
</comment>
<comment type="pathway">
    <text evidence="1">Cofactor biosynthesis; thiamine diphosphate biosynthesis.</text>
</comment>
<comment type="subunit">
    <text evidence="1">Homodimer.</text>
</comment>
<comment type="similarity">
    <text evidence="1">Belongs to the ThiC family.</text>
</comment>
<evidence type="ECO:0000255" key="1">
    <source>
        <dbReference type="HAMAP-Rule" id="MF_00089"/>
    </source>
</evidence>
<name>THIC_CAMJD</name>
<sequence length="430" mass="47498">MKTQMNYAKEGVFTKEMQIVAQKENLSKDFLLENIACGKIIIPANINHKSLDPNGIGFGLRTKVNVNLGVSNDCVDYSEEMKKVELAHKFGIEAIMDLSNYGKTSRFRDELVNVSKAMIGTVPVYDAVGFLEKDLKQIGAKDFLDVVYHHAKSGVDFMTIHAGINSRATHIFKQSKRLTNIVSRGGSVLYAWMMMKDAENPFFEYYDDLLDICLKYDVTLSLGDALRPGSTHDASDGAQISELIELSLLTQRAWDVGVQVMIEGPGHMAINEIEANMQLEKRLCKGAPFYVLGPLVTDIGAGYDHISGAIGGAVAAASGADMLCYVTPAEHLRLPNLEDVREGIVATKIAAHAGDIAKLPKERARDDEMSKARQEIDWEKMFKLAIDGEKAKKMFNERRPDDLNSCSMCGKMCAMNTMNQILKGEDVSLV</sequence>
<reference key="1">
    <citation type="submission" date="2007-07" db="EMBL/GenBank/DDBJ databases">
        <title>Complete genome sequence of Campylobacter jejuni subsp doylei 269.97 isolated from human blood.</title>
        <authorList>
            <person name="Fouts D.E."/>
            <person name="Mongodin E.F."/>
            <person name="Puiu D."/>
            <person name="Sebastian Y."/>
            <person name="Miller W.G."/>
            <person name="Mandrell R.E."/>
            <person name="Lastovica A.J."/>
            <person name="Nelson K.E."/>
        </authorList>
    </citation>
    <scope>NUCLEOTIDE SEQUENCE [LARGE SCALE GENOMIC DNA]</scope>
    <source>
        <strain>ATCC BAA-1458 / RM4099 / 269.97</strain>
    </source>
</reference>
<proteinExistence type="inferred from homology"/>
<feature type="chain" id="PRO_1000004750" description="Phosphomethylpyrimidine synthase">
    <location>
        <begin position="1"/>
        <end position="430"/>
    </location>
</feature>
<feature type="binding site" evidence="1">
    <location>
        <position position="67"/>
    </location>
    <ligand>
        <name>substrate</name>
    </ligand>
</feature>
<feature type="binding site" evidence="1">
    <location>
        <position position="96"/>
    </location>
    <ligand>
        <name>substrate</name>
    </ligand>
</feature>
<feature type="binding site" evidence="1">
    <location>
        <position position="125"/>
    </location>
    <ligand>
        <name>substrate</name>
    </ligand>
</feature>
<feature type="binding site" evidence="1">
    <location>
        <position position="161"/>
    </location>
    <ligand>
        <name>substrate</name>
    </ligand>
</feature>
<feature type="binding site" evidence="1">
    <location>
        <begin position="183"/>
        <end position="185"/>
    </location>
    <ligand>
        <name>substrate</name>
    </ligand>
</feature>
<feature type="binding site" evidence="1">
    <location>
        <begin position="224"/>
        <end position="227"/>
    </location>
    <ligand>
        <name>substrate</name>
    </ligand>
</feature>
<feature type="binding site" evidence="1">
    <location>
        <position position="263"/>
    </location>
    <ligand>
        <name>substrate</name>
    </ligand>
</feature>
<feature type="binding site" evidence="1">
    <location>
        <position position="267"/>
    </location>
    <ligand>
        <name>Zn(2+)</name>
        <dbReference type="ChEBI" id="CHEBI:29105"/>
    </ligand>
</feature>
<feature type="binding site" evidence="1">
    <location>
        <position position="290"/>
    </location>
    <ligand>
        <name>substrate</name>
    </ligand>
</feature>
<feature type="binding site" evidence="1">
    <location>
        <position position="331"/>
    </location>
    <ligand>
        <name>Zn(2+)</name>
        <dbReference type="ChEBI" id="CHEBI:29105"/>
    </ligand>
</feature>
<feature type="binding site" evidence="1">
    <location>
        <position position="406"/>
    </location>
    <ligand>
        <name>[4Fe-4S] cluster</name>
        <dbReference type="ChEBI" id="CHEBI:49883"/>
        <note>4Fe-4S-S-AdoMet</note>
    </ligand>
</feature>
<feature type="binding site" evidence="1">
    <location>
        <position position="409"/>
    </location>
    <ligand>
        <name>[4Fe-4S] cluster</name>
        <dbReference type="ChEBI" id="CHEBI:49883"/>
        <note>4Fe-4S-S-AdoMet</note>
    </ligand>
</feature>
<feature type="binding site" evidence="1">
    <location>
        <position position="413"/>
    </location>
    <ligand>
        <name>[4Fe-4S] cluster</name>
        <dbReference type="ChEBI" id="CHEBI:49883"/>
        <note>4Fe-4S-S-AdoMet</note>
    </ligand>
</feature>
<gene>
    <name evidence="1" type="primary">thiC</name>
    <name type="ordered locus">JJD26997_1485</name>
</gene>
<protein>
    <recommendedName>
        <fullName evidence="1">Phosphomethylpyrimidine synthase</fullName>
        <ecNumber evidence="1">4.1.99.17</ecNumber>
    </recommendedName>
    <alternativeName>
        <fullName evidence="1">Hydroxymethylpyrimidine phosphate synthase</fullName>
        <shortName evidence="1">HMP-P synthase</shortName>
        <shortName evidence="1">HMP-phosphate synthase</shortName>
        <shortName evidence="1">HMPP synthase</shortName>
    </alternativeName>
    <alternativeName>
        <fullName evidence="1">Thiamine biosynthesis protein ThiC</fullName>
    </alternativeName>
</protein>
<dbReference type="EC" id="4.1.99.17" evidence="1"/>
<dbReference type="EMBL" id="CP000768">
    <property type="protein sequence ID" value="ABS44621.1"/>
    <property type="molecule type" value="Genomic_DNA"/>
</dbReference>
<dbReference type="SMR" id="A7H4T0"/>
<dbReference type="KEGG" id="cjd:JJD26997_1485"/>
<dbReference type="HOGENOM" id="CLU_013181_2_2_7"/>
<dbReference type="UniPathway" id="UPA00060"/>
<dbReference type="Proteomes" id="UP000002302">
    <property type="component" value="Chromosome"/>
</dbReference>
<dbReference type="GO" id="GO:0005829">
    <property type="term" value="C:cytosol"/>
    <property type="evidence" value="ECO:0007669"/>
    <property type="project" value="TreeGrafter"/>
</dbReference>
<dbReference type="GO" id="GO:0051539">
    <property type="term" value="F:4 iron, 4 sulfur cluster binding"/>
    <property type="evidence" value="ECO:0007669"/>
    <property type="project" value="UniProtKB-KW"/>
</dbReference>
<dbReference type="GO" id="GO:0016830">
    <property type="term" value="F:carbon-carbon lyase activity"/>
    <property type="evidence" value="ECO:0007669"/>
    <property type="project" value="InterPro"/>
</dbReference>
<dbReference type="GO" id="GO:0008270">
    <property type="term" value="F:zinc ion binding"/>
    <property type="evidence" value="ECO:0007669"/>
    <property type="project" value="UniProtKB-UniRule"/>
</dbReference>
<dbReference type="GO" id="GO:0009228">
    <property type="term" value="P:thiamine biosynthetic process"/>
    <property type="evidence" value="ECO:0007669"/>
    <property type="project" value="UniProtKB-KW"/>
</dbReference>
<dbReference type="GO" id="GO:0009229">
    <property type="term" value="P:thiamine diphosphate biosynthetic process"/>
    <property type="evidence" value="ECO:0007669"/>
    <property type="project" value="UniProtKB-UniRule"/>
</dbReference>
<dbReference type="FunFam" id="3.20.20.540:FF:000001">
    <property type="entry name" value="Phosphomethylpyrimidine synthase"/>
    <property type="match status" value="1"/>
</dbReference>
<dbReference type="Gene3D" id="6.10.250.620">
    <property type="match status" value="1"/>
</dbReference>
<dbReference type="Gene3D" id="3.20.20.540">
    <property type="entry name" value="Radical SAM ThiC family, central domain"/>
    <property type="match status" value="1"/>
</dbReference>
<dbReference type="HAMAP" id="MF_00089">
    <property type="entry name" value="ThiC"/>
    <property type="match status" value="1"/>
</dbReference>
<dbReference type="InterPro" id="IPR037509">
    <property type="entry name" value="ThiC"/>
</dbReference>
<dbReference type="InterPro" id="IPR038521">
    <property type="entry name" value="ThiC/Bza_core_dom"/>
</dbReference>
<dbReference type="InterPro" id="IPR002817">
    <property type="entry name" value="ThiC/BzaA/B"/>
</dbReference>
<dbReference type="NCBIfam" id="NF009895">
    <property type="entry name" value="PRK13352.1"/>
    <property type="match status" value="1"/>
</dbReference>
<dbReference type="NCBIfam" id="TIGR00190">
    <property type="entry name" value="thiC"/>
    <property type="match status" value="1"/>
</dbReference>
<dbReference type="PANTHER" id="PTHR30557:SF1">
    <property type="entry name" value="PHOSPHOMETHYLPYRIMIDINE SYNTHASE, CHLOROPLASTIC"/>
    <property type="match status" value="1"/>
</dbReference>
<dbReference type="PANTHER" id="PTHR30557">
    <property type="entry name" value="THIAMINE BIOSYNTHESIS PROTEIN THIC"/>
    <property type="match status" value="1"/>
</dbReference>
<dbReference type="Pfam" id="PF01964">
    <property type="entry name" value="ThiC_Rad_SAM"/>
    <property type="match status" value="1"/>
</dbReference>
<dbReference type="SFLD" id="SFLDF00407">
    <property type="entry name" value="phosphomethylpyrimidine_syntha"/>
    <property type="match status" value="1"/>
</dbReference>
<dbReference type="SFLD" id="SFLDG01114">
    <property type="entry name" value="phosphomethylpyrimidine_syntha"/>
    <property type="match status" value="1"/>
</dbReference>
<dbReference type="SFLD" id="SFLDS00113">
    <property type="entry name" value="Radical_SAM_Phosphomethylpyrim"/>
    <property type="match status" value="1"/>
</dbReference>
<accession>A7H4T0</accession>